<keyword id="KW-0029">Amino-acid transport</keyword>
<keyword id="KW-0472">Membrane</keyword>
<keyword id="KW-1185">Reference proteome</keyword>
<keyword id="KW-0812">Transmembrane</keyword>
<keyword id="KW-1133">Transmembrane helix</keyword>
<keyword id="KW-0813">Transport</keyword>
<reference key="1">
    <citation type="journal article" date="2000" name="Nature">
        <title>Sequence and analysis of chromosome 3 of the plant Arabidopsis thaliana.</title>
        <authorList>
            <person name="Salanoubat M."/>
            <person name="Lemcke K."/>
            <person name="Rieger M."/>
            <person name="Ansorge W."/>
            <person name="Unseld M."/>
            <person name="Fartmann B."/>
            <person name="Valle G."/>
            <person name="Bloecker H."/>
            <person name="Perez-Alonso M."/>
            <person name="Obermaier B."/>
            <person name="Delseny M."/>
            <person name="Boutry M."/>
            <person name="Grivell L.A."/>
            <person name="Mache R."/>
            <person name="Puigdomenech P."/>
            <person name="De Simone V."/>
            <person name="Choisne N."/>
            <person name="Artiguenave F."/>
            <person name="Robert C."/>
            <person name="Brottier P."/>
            <person name="Wincker P."/>
            <person name="Cattolico L."/>
            <person name="Weissenbach J."/>
            <person name="Saurin W."/>
            <person name="Quetier F."/>
            <person name="Schaefer M."/>
            <person name="Mueller-Auer S."/>
            <person name="Gabel C."/>
            <person name="Fuchs M."/>
            <person name="Benes V."/>
            <person name="Wurmbach E."/>
            <person name="Drzonek H."/>
            <person name="Erfle H."/>
            <person name="Jordan N."/>
            <person name="Bangert S."/>
            <person name="Wiedelmann R."/>
            <person name="Kranz H."/>
            <person name="Voss H."/>
            <person name="Holland R."/>
            <person name="Brandt P."/>
            <person name="Nyakatura G."/>
            <person name="Vezzi A."/>
            <person name="D'Angelo M."/>
            <person name="Pallavicini A."/>
            <person name="Toppo S."/>
            <person name="Simionati B."/>
            <person name="Conrad A."/>
            <person name="Hornischer K."/>
            <person name="Kauer G."/>
            <person name="Loehnert T.-H."/>
            <person name="Nordsiek G."/>
            <person name="Reichelt J."/>
            <person name="Scharfe M."/>
            <person name="Schoen O."/>
            <person name="Bargues M."/>
            <person name="Terol J."/>
            <person name="Climent J."/>
            <person name="Navarro P."/>
            <person name="Collado C."/>
            <person name="Perez-Perez A."/>
            <person name="Ottenwaelder B."/>
            <person name="Duchemin D."/>
            <person name="Cooke R."/>
            <person name="Laudie M."/>
            <person name="Berger-Llauro C."/>
            <person name="Purnelle B."/>
            <person name="Masuy D."/>
            <person name="de Haan M."/>
            <person name="Maarse A.C."/>
            <person name="Alcaraz J.-P."/>
            <person name="Cottet A."/>
            <person name="Casacuberta E."/>
            <person name="Monfort A."/>
            <person name="Argiriou A."/>
            <person name="Flores M."/>
            <person name="Liguori R."/>
            <person name="Vitale D."/>
            <person name="Mannhaupt G."/>
            <person name="Haase D."/>
            <person name="Schoof H."/>
            <person name="Rudd S."/>
            <person name="Zaccaria P."/>
            <person name="Mewes H.-W."/>
            <person name="Mayer K.F.X."/>
            <person name="Kaul S."/>
            <person name="Town C.D."/>
            <person name="Koo H.L."/>
            <person name="Tallon L.J."/>
            <person name="Jenkins J."/>
            <person name="Rooney T."/>
            <person name="Rizzo M."/>
            <person name="Walts A."/>
            <person name="Utterback T."/>
            <person name="Fujii C.Y."/>
            <person name="Shea T.P."/>
            <person name="Creasy T.H."/>
            <person name="Haas B."/>
            <person name="Maiti R."/>
            <person name="Wu D."/>
            <person name="Peterson J."/>
            <person name="Van Aken S."/>
            <person name="Pai G."/>
            <person name="Militscher J."/>
            <person name="Sellers P."/>
            <person name="Gill J.E."/>
            <person name="Feldblyum T.V."/>
            <person name="Preuss D."/>
            <person name="Lin X."/>
            <person name="Nierman W.C."/>
            <person name="Salzberg S.L."/>
            <person name="White O."/>
            <person name="Venter J.C."/>
            <person name="Fraser C.M."/>
            <person name="Kaneko T."/>
            <person name="Nakamura Y."/>
            <person name="Sato S."/>
            <person name="Kato T."/>
            <person name="Asamizu E."/>
            <person name="Sasamoto S."/>
            <person name="Kimura T."/>
            <person name="Idesawa K."/>
            <person name="Kawashima K."/>
            <person name="Kishida Y."/>
            <person name="Kiyokawa C."/>
            <person name="Kohara M."/>
            <person name="Matsumoto M."/>
            <person name="Matsuno A."/>
            <person name="Muraki A."/>
            <person name="Nakayama S."/>
            <person name="Nakazaki N."/>
            <person name="Shinpo S."/>
            <person name="Takeuchi C."/>
            <person name="Wada T."/>
            <person name="Watanabe A."/>
            <person name="Yamada M."/>
            <person name="Yasuda M."/>
            <person name="Tabata S."/>
        </authorList>
    </citation>
    <scope>NUCLEOTIDE SEQUENCE [LARGE SCALE GENOMIC DNA]</scope>
    <source>
        <strain>cv. Columbia</strain>
    </source>
</reference>
<reference key="2">
    <citation type="journal article" date="2017" name="Plant J.">
        <title>Araport11: a complete reannotation of the Arabidopsis thaliana reference genome.</title>
        <authorList>
            <person name="Cheng C.Y."/>
            <person name="Krishnakumar V."/>
            <person name="Chan A.P."/>
            <person name="Thibaud-Nissen F."/>
            <person name="Schobel S."/>
            <person name="Town C.D."/>
        </authorList>
    </citation>
    <scope>GENOME REANNOTATION</scope>
    <source>
        <strain>cv. Columbia</strain>
    </source>
</reference>
<reference key="3">
    <citation type="journal article" date="2006" name="Plant Biotechnol. J.">
        <title>Simultaneous high-throughput recombinational cloning of open reading frames in closed and open configurations.</title>
        <authorList>
            <person name="Underwood B.A."/>
            <person name="Vanderhaeghen R."/>
            <person name="Whitford R."/>
            <person name="Town C.D."/>
            <person name="Hilson P."/>
        </authorList>
    </citation>
    <scope>NUCLEOTIDE SEQUENCE [LARGE SCALE MRNA]</scope>
    <source>
        <strain>cv. Columbia</strain>
    </source>
</reference>
<reference key="4">
    <citation type="journal article" date="2017" name="FEBS Lett.">
        <title>Functional identification of AtAVT3, a family of vacuolar amino acid transporters, in Arabidopsis.</title>
        <authorList>
            <person name="Fujiki Y."/>
            <person name="Teshima H."/>
            <person name="Kashiwao S."/>
            <person name="Kawano-Kawada M."/>
            <person name="Ohsumi Y."/>
            <person name="Kakinuma Y."/>
            <person name="Sekito T."/>
        </authorList>
    </citation>
    <scope>GENE FAMILY</scope>
    <scope>NOMENCLATURE</scope>
</reference>
<feature type="chain" id="PRO_0000440108" description="Amino acid transporter AVT1G">
    <location>
        <begin position="1"/>
        <end position="524"/>
    </location>
</feature>
<feature type="transmembrane region" description="Helical; Name=1" evidence="1">
    <location>
        <begin position="139"/>
        <end position="159"/>
    </location>
</feature>
<feature type="transmembrane region" description="Helical; Name=2" evidence="1">
    <location>
        <begin position="164"/>
        <end position="184"/>
    </location>
</feature>
<feature type="transmembrane region" description="Helical; Name=3" evidence="1">
    <location>
        <begin position="211"/>
        <end position="231"/>
    </location>
</feature>
<feature type="transmembrane region" description="Helical; Name=4" evidence="1">
    <location>
        <begin position="247"/>
        <end position="267"/>
    </location>
</feature>
<feature type="transmembrane region" description="Helical; Name=5" evidence="1">
    <location>
        <begin position="280"/>
        <end position="300"/>
    </location>
</feature>
<feature type="transmembrane region" description="Helical; Name=6" evidence="1">
    <location>
        <begin position="319"/>
        <end position="339"/>
    </location>
</feature>
<feature type="transmembrane region" description="Helical; Name=7" evidence="1">
    <location>
        <begin position="349"/>
        <end position="369"/>
    </location>
</feature>
<feature type="transmembrane region" description="Helical; Name=8" evidence="1">
    <location>
        <begin position="398"/>
        <end position="418"/>
    </location>
</feature>
<feature type="transmembrane region" description="Helical; Name=9" evidence="1">
    <location>
        <begin position="442"/>
        <end position="462"/>
    </location>
</feature>
<feature type="transmembrane region" description="Helical; Name=10" evidence="1">
    <location>
        <begin position="465"/>
        <end position="485"/>
    </location>
</feature>
<feature type="transmembrane region" description="Helical; Name=11" evidence="1">
    <location>
        <begin position="496"/>
        <end position="516"/>
    </location>
</feature>
<feature type="region of interest" description="Disordered" evidence="2">
    <location>
        <begin position="1"/>
        <end position="47"/>
    </location>
</feature>
<feature type="compositionally biased region" description="Acidic residues" evidence="2">
    <location>
        <begin position="14"/>
        <end position="32"/>
    </location>
</feature>
<feature type="compositionally biased region" description="Low complexity" evidence="2">
    <location>
        <begin position="33"/>
        <end position="43"/>
    </location>
</feature>
<comment type="subcellular location">
    <subcellularLocation>
        <location evidence="1">Membrane</location>
        <topology evidence="1">Multi-pass membrane protein</topology>
    </subcellularLocation>
</comment>
<comment type="similarity">
    <text evidence="4">Belongs to the amino acid/polyamine transporter 2 family. Amino acid/auxin permease (AAAP) (TC 2.A.18.5) subfamily.</text>
</comment>
<comment type="sequence caution" evidence="4">
    <conflict type="erroneous gene model prediction">
        <sequence resource="EMBL-CDS" id="AAF14030"/>
    </conflict>
</comment>
<comment type="sequence caution" evidence="4">
    <conflict type="erroneous termination">
        <sequence resource="EMBL-CDS" id="ABK28550"/>
    </conflict>
    <text>Extended C-terminus.</text>
</comment>
<proteinExistence type="evidence at transcript level"/>
<accession>Q1PER9</accession>
<accession>A0MEV0</accession>
<accession>Q9SR30</accession>
<evidence type="ECO:0000255" key="1"/>
<evidence type="ECO:0000256" key="2">
    <source>
        <dbReference type="SAM" id="MobiDB-lite"/>
    </source>
</evidence>
<evidence type="ECO:0000303" key="3">
    <source>
    </source>
</evidence>
<evidence type="ECO:0000305" key="4"/>
<evidence type="ECO:0000312" key="5">
    <source>
        <dbReference type="Araport" id="AT3G09330"/>
    </source>
</evidence>
<evidence type="ECO:0000312" key="6">
    <source>
        <dbReference type="EMBL" id="AAF14030.1"/>
    </source>
</evidence>
<organism>
    <name type="scientific">Arabidopsis thaliana</name>
    <name type="common">Mouse-ear cress</name>
    <dbReference type="NCBI Taxonomy" id="3702"/>
    <lineage>
        <taxon>Eukaryota</taxon>
        <taxon>Viridiplantae</taxon>
        <taxon>Streptophyta</taxon>
        <taxon>Embryophyta</taxon>
        <taxon>Tracheophyta</taxon>
        <taxon>Spermatophyta</taxon>
        <taxon>Magnoliopsida</taxon>
        <taxon>eudicotyledons</taxon>
        <taxon>Gunneridae</taxon>
        <taxon>Pentapetalae</taxon>
        <taxon>rosids</taxon>
        <taxon>malvids</taxon>
        <taxon>Brassicales</taxon>
        <taxon>Brassicaceae</taxon>
        <taxon>Camelineae</taxon>
        <taxon>Arabidopsis</taxon>
    </lineage>
</organism>
<protein>
    <recommendedName>
        <fullName evidence="4">Amino acid transporter AVT1G</fullName>
        <shortName evidence="3">AtAvt1G</shortName>
    </recommendedName>
</protein>
<gene>
    <name evidence="3" type="primary">AVT1G</name>
    <name evidence="5" type="ordered locus">At3g09330</name>
    <name evidence="6" type="ORF">F3L24.20</name>
</gene>
<sequence length="524" mass="57068">MELEEQERDILFPTDDEECQVDVSCDDEDDDSSSYSSLSQNDSAPWPRSYRQSVDILTGVTPPTISFIHRRSSQTSFTSSVASLYKRRPTSIANSFASSTSKQPLLSEKDDVLFLSSQIGLSNTDLSYGEPNFCSFPQSVLNGINVLCGISLLTMPYAVKEGGWLGLCILLSFAIITCYTGILLKRCLESSSDLRTYPDIGQAAFGFTGRLIISILLYMELYVCCVEYIIMMSDNLSRVFPNITLNIVGVSLDSPQIFAISATLIVLPTVWLKDLSLLSYLSAGGVFVSILLALCLFWVGSVDGVGFHTGGKSLDLANLPVAIGIFGFGFSGHAVLPSIYSSMKEPSKFPLVLLISFGFCVFFYIVVAICGYSMFGEAIQSQFTLNMPQQYTASKIAVWTAVVVPMTKYALALTPIVLGLEELMLPSEKMRSYGVSIFIKTILVLSTLVVALTFPFFAIMGALMGSFLAMLVDFIFPCLCYLSILKGRLSKTQIGICVFIIISGIVSGCCGTYSAIGRLVGKLD</sequence>
<dbReference type="EMBL" id="AC011436">
    <property type="protein sequence ID" value="AAF14030.1"/>
    <property type="status" value="ALT_SEQ"/>
    <property type="molecule type" value="Genomic_DNA"/>
</dbReference>
<dbReference type="EMBL" id="CP002686">
    <property type="protein sequence ID" value="AEE74751.1"/>
    <property type="molecule type" value="Genomic_DNA"/>
</dbReference>
<dbReference type="EMBL" id="DQ446648">
    <property type="protein sequence ID" value="ABE65929.1"/>
    <property type="molecule type" value="mRNA"/>
</dbReference>
<dbReference type="EMBL" id="DQ653073">
    <property type="protein sequence ID" value="ABK28550.1"/>
    <property type="status" value="ALT_SEQ"/>
    <property type="molecule type" value="mRNA"/>
</dbReference>
<dbReference type="RefSeq" id="NP_187544.2">
    <property type="nucleotide sequence ID" value="NM_111767.3"/>
</dbReference>
<dbReference type="SMR" id="Q1PER9"/>
<dbReference type="FunCoup" id="Q1PER9">
    <property type="interactions" value="230"/>
</dbReference>
<dbReference type="PaxDb" id="3702-AT3G09330.1"/>
<dbReference type="ProteomicsDB" id="241017"/>
<dbReference type="EnsemblPlants" id="AT3G09330.1">
    <property type="protein sequence ID" value="AT3G09330.1"/>
    <property type="gene ID" value="AT3G09330"/>
</dbReference>
<dbReference type="GeneID" id="820089"/>
<dbReference type="Gramene" id="AT3G09330.1">
    <property type="protein sequence ID" value="AT3G09330.1"/>
    <property type="gene ID" value="AT3G09330"/>
</dbReference>
<dbReference type="KEGG" id="ath:AT3G09330"/>
<dbReference type="Araport" id="AT3G09330"/>
<dbReference type="TAIR" id="AT3G09330"/>
<dbReference type="eggNOG" id="KOG1303">
    <property type="taxonomic scope" value="Eukaryota"/>
</dbReference>
<dbReference type="HOGENOM" id="CLU_009646_1_0_1"/>
<dbReference type="InParanoid" id="Q1PER9"/>
<dbReference type="OMA" id="TNDERVC"/>
<dbReference type="PhylomeDB" id="Q1PER9"/>
<dbReference type="PRO" id="PR:Q1PER9"/>
<dbReference type="Proteomes" id="UP000006548">
    <property type="component" value="Chromosome 3"/>
</dbReference>
<dbReference type="ExpressionAtlas" id="Q1PER9">
    <property type="expression patterns" value="baseline and differential"/>
</dbReference>
<dbReference type="GO" id="GO:0031090">
    <property type="term" value="C:organelle membrane"/>
    <property type="evidence" value="ECO:0007669"/>
    <property type="project" value="UniProtKB-ARBA"/>
</dbReference>
<dbReference type="GO" id="GO:0006865">
    <property type="term" value="P:amino acid transport"/>
    <property type="evidence" value="ECO:0007669"/>
    <property type="project" value="UniProtKB-KW"/>
</dbReference>
<dbReference type="FunFam" id="1.20.1740.10:FF:000047">
    <property type="entry name" value="Amino acid transporter AVT1A"/>
    <property type="match status" value="1"/>
</dbReference>
<dbReference type="InterPro" id="IPR013057">
    <property type="entry name" value="AA_transpt_TM"/>
</dbReference>
<dbReference type="PANTHER" id="PTHR22950">
    <property type="entry name" value="AMINO ACID TRANSPORTER"/>
    <property type="match status" value="1"/>
</dbReference>
<dbReference type="PANTHER" id="PTHR22950:SF692">
    <property type="entry name" value="TRANSMEMBRANE AMINO ACID TRANSPORTER FAMILY PROTEIN"/>
    <property type="match status" value="1"/>
</dbReference>
<dbReference type="Pfam" id="PF01490">
    <property type="entry name" value="Aa_trans"/>
    <property type="match status" value="1"/>
</dbReference>
<name>AVT1G_ARATH</name>